<protein>
    <recommendedName>
        <fullName evidence="1">Imidazole glycerol phosphate synthase subunit HisF</fullName>
        <ecNumber evidence="1">4.3.2.10</ecNumber>
    </recommendedName>
    <alternativeName>
        <fullName evidence="1">IGP synthase cyclase subunit</fullName>
    </alternativeName>
    <alternativeName>
        <fullName evidence="1">IGP synthase subunit HisF</fullName>
    </alternativeName>
    <alternativeName>
        <fullName evidence="1">ImGP synthase subunit HisF</fullName>
        <shortName evidence="1">IGPS subunit HisF</shortName>
    </alternativeName>
</protein>
<accession>Q3BUF2</accession>
<name>HIS6_XANE5</name>
<feature type="chain" id="PRO_0000142268" description="Imidazole glycerol phosphate synthase subunit HisF">
    <location>
        <begin position="1"/>
        <end position="258"/>
    </location>
</feature>
<feature type="active site" evidence="1">
    <location>
        <position position="11"/>
    </location>
</feature>
<feature type="active site" evidence="1">
    <location>
        <position position="130"/>
    </location>
</feature>
<proteinExistence type="inferred from homology"/>
<gene>
    <name evidence="1" type="primary">hisF</name>
    <name type="ordered locus">XCV1880</name>
</gene>
<keyword id="KW-0028">Amino-acid biosynthesis</keyword>
<keyword id="KW-0963">Cytoplasm</keyword>
<keyword id="KW-0368">Histidine biosynthesis</keyword>
<keyword id="KW-0456">Lyase</keyword>
<sequence>MLSRRIIPCLDVRDGRVVKGVKFRDHIDMGDIVELALRYRAQGADELVFYDIGASPEGRSVDYTWVERVARLIDIPFCVAGGIGDVETARAVLHAGADKISINSPALGRPQLISELADAFGVQCVVVGIDSIREEDGQWRVRRYTGDPSKTQALPMRTLDWVAEAQRLGAGEIVLNCMDNDGVRRGYDIAQLRQVRALCRVPLIASGGAGEMQHFADVFDQADVDGALAASVFHSGAIPIPELKRFLRAQQIEVRDGQ</sequence>
<dbReference type="EC" id="4.3.2.10" evidence="1"/>
<dbReference type="EMBL" id="AM039952">
    <property type="protein sequence ID" value="CAJ23557.1"/>
    <property type="molecule type" value="Genomic_DNA"/>
</dbReference>
<dbReference type="RefSeq" id="WP_008571446.1">
    <property type="nucleotide sequence ID" value="NZ_CP017190.1"/>
</dbReference>
<dbReference type="SMR" id="Q3BUF2"/>
<dbReference type="STRING" id="456327.BJD11_13025"/>
<dbReference type="GeneID" id="61778731"/>
<dbReference type="KEGG" id="xcv:XCV1880"/>
<dbReference type="eggNOG" id="COG0107">
    <property type="taxonomic scope" value="Bacteria"/>
</dbReference>
<dbReference type="HOGENOM" id="CLU_048577_4_0_6"/>
<dbReference type="UniPathway" id="UPA00031">
    <property type="reaction ID" value="UER00010"/>
</dbReference>
<dbReference type="Proteomes" id="UP000007069">
    <property type="component" value="Chromosome"/>
</dbReference>
<dbReference type="GO" id="GO:0005737">
    <property type="term" value="C:cytoplasm"/>
    <property type="evidence" value="ECO:0007669"/>
    <property type="project" value="UniProtKB-SubCell"/>
</dbReference>
<dbReference type="GO" id="GO:0000107">
    <property type="term" value="F:imidazoleglycerol-phosphate synthase activity"/>
    <property type="evidence" value="ECO:0007669"/>
    <property type="project" value="UniProtKB-UniRule"/>
</dbReference>
<dbReference type="GO" id="GO:0016829">
    <property type="term" value="F:lyase activity"/>
    <property type="evidence" value="ECO:0007669"/>
    <property type="project" value="UniProtKB-KW"/>
</dbReference>
<dbReference type="GO" id="GO:0000105">
    <property type="term" value="P:L-histidine biosynthetic process"/>
    <property type="evidence" value="ECO:0007669"/>
    <property type="project" value="UniProtKB-UniRule"/>
</dbReference>
<dbReference type="CDD" id="cd04731">
    <property type="entry name" value="HisF"/>
    <property type="match status" value="1"/>
</dbReference>
<dbReference type="FunFam" id="3.20.20.70:FF:000006">
    <property type="entry name" value="Imidazole glycerol phosphate synthase subunit HisF"/>
    <property type="match status" value="1"/>
</dbReference>
<dbReference type="Gene3D" id="3.20.20.70">
    <property type="entry name" value="Aldolase class I"/>
    <property type="match status" value="1"/>
</dbReference>
<dbReference type="HAMAP" id="MF_01013">
    <property type="entry name" value="HisF"/>
    <property type="match status" value="1"/>
</dbReference>
<dbReference type="InterPro" id="IPR013785">
    <property type="entry name" value="Aldolase_TIM"/>
</dbReference>
<dbReference type="InterPro" id="IPR006062">
    <property type="entry name" value="His_biosynth"/>
</dbReference>
<dbReference type="InterPro" id="IPR004651">
    <property type="entry name" value="HisF"/>
</dbReference>
<dbReference type="InterPro" id="IPR050064">
    <property type="entry name" value="IGPS_HisA/HisF"/>
</dbReference>
<dbReference type="InterPro" id="IPR011060">
    <property type="entry name" value="RibuloseP-bd_barrel"/>
</dbReference>
<dbReference type="NCBIfam" id="TIGR00735">
    <property type="entry name" value="hisF"/>
    <property type="match status" value="1"/>
</dbReference>
<dbReference type="PANTHER" id="PTHR21235:SF2">
    <property type="entry name" value="IMIDAZOLE GLYCEROL PHOSPHATE SYNTHASE HISHF"/>
    <property type="match status" value="1"/>
</dbReference>
<dbReference type="PANTHER" id="PTHR21235">
    <property type="entry name" value="IMIDAZOLE GLYCEROL PHOSPHATE SYNTHASE SUBUNIT HISF/H IGP SYNTHASE SUBUNIT HISF/H"/>
    <property type="match status" value="1"/>
</dbReference>
<dbReference type="Pfam" id="PF00977">
    <property type="entry name" value="His_biosynth"/>
    <property type="match status" value="1"/>
</dbReference>
<dbReference type="SUPFAM" id="SSF51366">
    <property type="entry name" value="Ribulose-phoshate binding barrel"/>
    <property type="match status" value="1"/>
</dbReference>
<reference key="1">
    <citation type="journal article" date="2005" name="J. Bacteriol.">
        <title>Insights into genome plasticity and pathogenicity of the plant pathogenic Bacterium Xanthomonas campestris pv. vesicatoria revealed by the complete genome sequence.</title>
        <authorList>
            <person name="Thieme F."/>
            <person name="Koebnik R."/>
            <person name="Bekel T."/>
            <person name="Berger C."/>
            <person name="Boch J."/>
            <person name="Buettner D."/>
            <person name="Caldana C."/>
            <person name="Gaigalat L."/>
            <person name="Goesmann A."/>
            <person name="Kay S."/>
            <person name="Kirchner O."/>
            <person name="Lanz C."/>
            <person name="Linke B."/>
            <person name="McHardy A.C."/>
            <person name="Meyer F."/>
            <person name="Mittenhuber G."/>
            <person name="Nies D.H."/>
            <person name="Niesbach-Kloesgen U."/>
            <person name="Patschkowski T."/>
            <person name="Rueckert C."/>
            <person name="Rupp O."/>
            <person name="Schneiker S."/>
            <person name="Schuster S.C."/>
            <person name="Vorhoelter F.J."/>
            <person name="Weber E."/>
            <person name="Puehler A."/>
            <person name="Bonas U."/>
            <person name="Bartels D."/>
            <person name="Kaiser O."/>
        </authorList>
    </citation>
    <scope>NUCLEOTIDE SEQUENCE [LARGE SCALE GENOMIC DNA]</scope>
    <source>
        <strain>85-10</strain>
    </source>
</reference>
<evidence type="ECO:0000255" key="1">
    <source>
        <dbReference type="HAMAP-Rule" id="MF_01013"/>
    </source>
</evidence>
<comment type="function">
    <text evidence="1">IGPS catalyzes the conversion of PRFAR and glutamine to IGP, AICAR and glutamate. The HisF subunit catalyzes the cyclization activity that produces IGP and AICAR from PRFAR using the ammonia provided by the HisH subunit.</text>
</comment>
<comment type="catalytic activity">
    <reaction evidence="1">
        <text>5-[(5-phospho-1-deoxy-D-ribulos-1-ylimino)methylamino]-1-(5-phospho-beta-D-ribosyl)imidazole-4-carboxamide + L-glutamine = D-erythro-1-(imidazol-4-yl)glycerol 3-phosphate + 5-amino-1-(5-phospho-beta-D-ribosyl)imidazole-4-carboxamide + L-glutamate + H(+)</text>
        <dbReference type="Rhea" id="RHEA:24793"/>
        <dbReference type="ChEBI" id="CHEBI:15378"/>
        <dbReference type="ChEBI" id="CHEBI:29985"/>
        <dbReference type="ChEBI" id="CHEBI:58278"/>
        <dbReference type="ChEBI" id="CHEBI:58359"/>
        <dbReference type="ChEBI" id="CHEBI:58475"/>
        <dbReference type="ChEBI" id="CHEBI:58525"/>
        <dbReference type="EC" id="4.3.2.10"/>
    </reaction>
</comment>
<comment type="pathway">
    <text evidence="1">Amino-acid biosynthesis; L-histidine biosynthesis; L-histidine from 5-phospho-alpha-D-ribose 1-diphosphate: step 5/9.</text>
</comment>
<comment type="subunit">
    <text evidence="1">Heterodimer of HisH and HisF.</text>
</comment>
<comment type="subcellular location">
    <subcellularLocation>
        <location evidence="1">Cytoplasm</location>
    </subcellularLocation>
</comment>
<comment type="similarity">
    <text evidence="1">Belongs to the HisA/HisF family.</text>
</comment>
<organism>
    <name type="scientific">Xanthomonas euvesicatoria pv. vesicatoria (strain 85-10)</name>
    <name type="common">Xanthomonas campestris pv. vesicatoria</name>
    <dbReference type="NCBI Taxonomy" id="316273"/>
    <lineage>
        <taxon>Bacteria</taxon>
        <taxon>Pseudomonadati</taxon>
        <taxon>Pseudomonadota</taxon>
        <taxon>Gammaproteobacteria</taxon>
        <taxon>Lysobacterales</taxon>
        <taxon>Lysobacteraceae</taxon>
        <taxon>Xanthomonas</taxon>
    </lineage>
</organism>